<keyword id="KW-0002">3D-structure</keyword>
<keyword id="KW-0167">Capsid protein</keyword>
<keyword id="KW-0945">Host-virus interaction</keyword>
<keyword id="KW-0479">Metal-binding</keyword>
<keyword id="KW-1185">Reference proteome</keyword>
<keyword id="KW-0677">Repeat</keyword>
<keyword id="KW-1198">Viral budding</keyword>
<keyword id="KW-1187">Viral budding via the host ESCRT complexes</keyword>
<keyword id="KW-0468">Viral matrix protein</keyword>
<keyword id="KW-0543">Viral nucleoprotein</keyword>
<keyword id="KW-1188">Viral release from host cell</keyword>
<keyword id="KW-0946">Virion</keyword>
<keyword id="KW-0917">Virion maturation</keyword>
<keyword id="KW-0862">Zinc</keyword>
<keyword id="KW-0863">Zinc-finger</keyword>
<evidence type="ECO:0000250" key="1"/>
<evidence type="ECO:0000255" key="2"/>
<evidence type="ECO:0000255" key="3">
    <source>
        <dbReference type="PROSITE-ProRule" id="PRU00047"/>
    </source>
</evidence>
<evidence type="ECO:0000305" key="4"/>
<evidence type="ECO:0007829" key="5">
    <source>
        <dbReference type="PDB" id="2N1R"/>
    </source>
</evidence>
<evidence type="ECO:0007829" key="6">
    <source>
        <dbReference type="PDB" id="4IC9"/>
    </source>
</evidence>
<evidence type="ECO:0007829" key="7">
    <source>
        <dbReference type="PDB" id="5NA2"/>
    </source>
</evidence>
<accession>P16087</accession>
<name>GAG_FIVPE</name>
<dbReference type="EMBL" id="M25381">
    <property type="protein sequence ID" value="AAB59936.1"/>
    <property type="molecule type" value="Genomic_RNA"/>
</dbReference>
<dbReference type="PIR" id="A33543">
    <property type="entry name" value="FOLJFP"/>
</dbReference>
<dbReference type="RefSeq" id="NP_040972.1">
    <property type="nucleotide sequence ID" value="NC_001482.1"/>
</dbReference>
<dbReference type="PDB" id="2N1R">
    <property type="method" value="NMR"/>
    <property type="chains" value="A=2-135"/>
</dbReference>
<dbReference type="PDB" id="4IC9">
    <property type="method" value="X-ray"/>
    <property type="resolution" value="2.00 A"/>
    <property type="chains" value="A=1-135"/>
</dbReference>
<dbReference type="PDB" id="4ICA">
    <property type="method" value="X-ray"/>
    <property type="resolution" value="2.70 A"/>
    <property type="chains" value="A/B=1-120"/>
</dbReference>
<dbReference type="PDB" id="5DCK">
    <property type="method" value="X-ray"/>
    <property type="resolution" value="2.29 A"/>
    <property type="chains" value="A/B=278-347"/>
</dbReference>
<dbReference type="PDB" id="5NA2">
    <property type="method" value="X-ray"/>
    <property type="resolution" value="1.67 A"/>
    <property type="chains" value="A/B=136-348"/>
</dbReference>
<dbReference type="PDB" id="5XMF">
    <property type="method" value="X-ray"/>
    <property type="resolution" value="2.10 A"/>
    <property type="chains" value="C=40-48"/>
</dbReference>
<dbReference type="PDB" id="5XMM">
    <property type="method" value="X-ray"/>
    <property type="resolution" value="2.90 A"/>
    <property type="chains" value="C=40-48"/>
</dbReference>
<dbReference type="PDB" id="6WA3">
    <property type="method" value="NMR"/>
    <property type="chains" value="A=2-119"/>
</dbReference>
<dbReference type="PDB" id="6WA4">
    <property type="method" value="NMR"/>
    <property type="chains" value="A=2-119"/>
</dbReference>
<dbReference type="PDB" id="6WA5">
    <property type="method" value="NMR"/>
    <property type="chains" value="A=2-119"/>
</dbReference>
<dbReference type="PDBsum" id="2N1R"/>
<dbReference type="PDBsum" id="4IC9"/>
<dbReference type="PDBsum" id="4ICA"/>
<dbReference type="PDBsum" id="5DCK"/>
<dbReference type="PDBsum" id="5NA2"/>
<dbReference type="PDBsum" id="5XMF"/>
<dbReference type="PDBsum" id="5XMM"/>
<dbReference type="PDBsum" id="6WA3"/>
<dbReference type="PDBsum" id="6WA4"/>
<dbReference type="PDBsum" id="6WA5"/>
<dbReference type="BMRB" id="P16087"/>
<dbReference type="SMR" id="P16087"/>
<dbReference type="GeneID" id="1489988"/>
<dbReference type="KEGG" id="vg:1489988"/>
<dbReference type="EvolutionaryTrace" id="P16087"/>
<dbReference type="Proteomes" id="UP000242267">
    <property type="component" value="Segment"/>
</dbReference>
<dbReference type="GO" id="GO:0019013">
    <property type="term" value="C:viral nucleocapsid"/>
    <property type="evidence" value="ECO:0007669"/>
    <property type="project" value="UniProtKB-KW"/>
</dbReference>
<dbReference type="GO" id="GO:0003676">
    <property type="term" value="F:nucleic acid binding"/>
    <property type="evidence" value="ECO:0007669"/>
    <property type="project" value="InterPro"/>
</dbReference>
<dbReference type="GO" id="GO:0039660">
    <property type="term" value="F:structural constituent of virion"/>
    <property type="evidence" value="ECO:0007669"/>
    <property type="project" value="UniProtKB-KW"/>
</dbReference>
<dbReference type="GO" id="GO:0008270">
    <property type="term" value="F:zinc ion binding"/>
    <property type="evidence" value="ECO:0007669"/>
    <property type="project" value="UniProtKB-KW"/>
</dbReference>
<dbReference type="GO" id="GO:0039702">
    <property type="term" value="P:viral budding via host ESCRT complex"/>
    <property type="evidence" value="ECO:0007669"/>
    <property type="project" value="UniProtKB-KW"/>
</dbReference>
<dbReference type="Gene3D" id="1.10.1200.30">
    <property type="match status" value="1"/>
</dbReference>
<dbReference type="Gene3D" id="1.10.375.10">
    <property type="entry name" value="Human Immunodeficiency Virus Type 1 Capsid Protein"/>
    <property type="match status" value="1"/>
</dbReference>
<dbReference type="Gene3D" id="1.10.150.90">
    <property type="entry name" value="Immunodeficiency lentiviruses, gag gene matrix protein p17"/>
    <property type="match status" value="1"/>
</dbReference>
<dbReference type="Gene3D" id="4.10.60.10">
    <property type="entry name" value="Zinc finger, CCHC-type"/>
    <property type="match status" value="1"/>
</dbReference>
<dbReference type="InterPro" id="IPR045345">
    <property type="entry name" value="Gag_p24_C"/>
</dbReference>
<dbReference type="InterPro" id="IPR012344">
    <property type="entry name" value="Matrix_HIV/RSV_N"/>
</dbReference>
<dbReference type="InterPro" id="IPR050195">
    <property type="entry name" value="Primate_lentivir_Gag_pol-like"/>
</dbReference>
<dbReference type="InterPro" id="IPR008916">
    <property type="entry name" value="Retrov_capsid_C"/>
</dbReference>
<dbReference type="InterPro" id="IPR008919">
    <property type="entry name" value="Retrov_capsid_N"/>
</dbReference>
<dbReference type="InterPro" id="IPR001878">
    <property type="entry name" value="Znf_CCHC"/>
</dbReference>
<dbReference type="InterPro" id="IPR036875">
    <property type="entry name" value="Znf_CCHC_sf"/>
</dbReference>
<dbReference type="PANTHER" id="PTHR40389">
    <property type="entry name" value="ENDOGENOUS RETROVIRUS GROUP K MEMBER 24 GAG POLYPROTEIN-RELATED"/>
    <property type="match status" value="1"/>
</dbReference>
<dbReference type="PANTHER" id="PTHR40389:SF3">
    <property type="entry name" value="IGE-BINDING PROTEIN"/>
    <property type="match status" value="1"/>
</dbReference>
<dbReference type="Pfam" id="PF19317">
    <property type="entry name" value="Gag_p24_C"/>
    <property type="match status" value="1"/>
</dbReference>
<dbReference type="Pfam" id="PF00098">
    <property type="entry name" value="zf-CCHC"/>
    <property type="match status" value="2"/>
</dbReference>
<dbReference type="SMART" id="SM00343">
    <property type="entry name" value="ZnF_C2HC"/>
    <property type="match status" value="2"/>
</dbReference>
<dbReference type="SUPFAM" id="SSF47353">
    <property type="entry name" value="Retrovirus capsid dimerization domain-like"/>
    <property type="match status" value="1"/>
</dbReference>
<dbReference type="SUPFAM" id="SSF47943">
    <property type="entry name" value="Retrovirus capsid protein, N-terminal core domain"/>
    <property type="match status" value="1"/>
</dbReference>
<dbReference type="SUPFAM" id="SSF57756">
    <property type="entry name" value="Retrovirus zinc finger-like domains"/>
    <property type="match status" value="1"/>
</dbReference>
<dbReference type="PROSITE" id="PS50158">
    <property type="entry name" value="ZF_CCHC"/>
    <property type="match status" value="2"/>
</dbReference>
<organism>
    <name type="scientific">Feline immunodeficiency virus (isolate Petaluma)</name>
    <name type="common">FIV</name>
    <dbReference type="NCBI Taxonomy" id="11674"/>
    <lineage>
        <taxon>Viruses</taxon>
        <taxon>Riboviria</taxon>
        <taxon>Pararnavirae</taxon>
        <taxon>Artverviricota</taxon>
        <taxon>Revtraviricetes</taxon>
        <taxon>Ortervirales</taxon>
        <taxon>Retroviridae</taxon>
        <taxon>Orthoretrovirinae</taxon>
        <taxon>Lentivirus</taxon>
        <taxon>Feline immunodeficiency virus</taxon>
    </lineage>
</organism>
<comment type="function">
    <text evidence="1">Matrix protein p15 forms the outer shell of the core of the virus, lining the inner surface of the viral membrane.</text>
</comment>
<comment type="function">
    <text evidence="1">Capsid protein p24 forms the conical core of the virus that encapsulates the genomic RNA-nucleocapsid complex.</text>
</comment>
<comment type="function">
    <text evidence="1">Nucleocapsid protein p13 encapsulates and protects viral dimeric unspliced (genomic) RNA. Binds these RNAs through its zinc fingers (By similarity).</text>
</comment>
<comment type="subcellular location">
    <molecule>Matrix protein p15</molecule>
    <subcellularLocation>
        <location evidence="4">Virion</location>
    </subcellularLocation>
</comment>
<comment type="subcellular location">
    <molecule>Capsid protein p24</molecule>
    <subcellularLocation>
        <location evidence="4">Virion</location>
    </subcellularLocation>
</comment>
<comment type="subcellular location">
    <molecule>Nucleocapsid protein p13</molecule>
    <subcellularLocation>
        <location evidence="4">Virion</location>
    </subcellularLocation>
</comment>
<comment type="domain">
    <text evidence="1">Late-budding domains (L domains) are short sequence motifs essential for viral particle budding. They recruit proteins of the host ESCRT machinery (Endosomal Sorting Complex Required for Transport) or ESCRT-associated proteins. Nucleocapsid protein p13 contains one L domain: a PTAP/PSAP motif, which interacts with the UEV domain of TSG101 (By similarity).</text>
</comment>
<comment type="similarity">
    <text evidence="4">Belongs to the feline lentivirus group gag polyprotein family.</text>
</comment>
<proteinExistence type="evidence at protein level"/>
<gene>
    <name type="primary">gag</name>
</gene>
<sequence>MGNGQGRDWKMAIKRCSNVAVGVGGKSKKFGEGNFRWAIRMANVSTGREPGDIPETLDQLRLVICDLQERREKFGSSKEIDMAIVTLKVFAVAGLLNMTVSTAAAAENMYSQMGLDTRPSMKEAGGKEEGPPQAYPIQTVNGVPQYVALDPKMVSIFMEKAREGLGGEEVQLWFTAFSANLTPTDMATLIMAAPGCAADKEILDESLKQLTAEYDRTHPPDAPRPLPYFTAAEIMGIGLTQEQQAEARFAPARMQCRAWYLEALGKLAAIKAKSPRAVQLRQGAKEDYSSFIDRLFAQIDQEQNTAEVKLYLKQSLSIANANADCKKAMSHLKPESTLEEKLRACQEIGSPGYKMQLLAEALTKVQVVQSKGSGPVCFNCKKPGHLARQCREVKKCNKCGKPGHLAAKCWQGNRKNSGNWKAGRAAAPVNQMQQAVMPSAPPMEEKLLDL</sequence>
<feature type="chain" id="PRO_0000038784" description="Matrix protein p15">
    <location>
        <begin position="1"/>
        <end position="135"/>
    </location>
</feature>
<feature type="chain" id="PRO_0000038785" description="Capsid protein p24">
    <location>
        <begin position="136"/>
        <end position="357"/>
    </location>
</feature>
<feature type="peptide" id="PRO_0000272316" description="p1" evidence="2">
    <location>
        <begin position="358"/>
        <end position="366"/>
    </location>
</feature>
<feature type="chain" id="PRO_0000038786" description="Nucleocapsid protein p13">
    <location>
        <begin position="367"/>
        <end position="450"/>
    </location>
</feature>
<feature type="zinc finger region" description="CCHC-type 1" evidence="3">
    <location>
        <begin position="375"/>
        <end position="392"/>
    </location>
</feature>
<feature type="zinc finger region" description="CCHC-type 2" evidence="3">
    <location>
        <begin position="394"/>
        <end position="411"/>
    </location>
</feature>
<feature type="short sequence motif" description="PTAP/PSAP motif">
    <location>
        <begin position="438"/>
        <end position="441"/>
    </location>
</feature>
<feature type="sequence conflict" description="In Ref. 1; AAB59936." evidence="4" ref="1">
    <original>L</original>
    <variation>V</variation>
    <location>
        <position position="405"/>
    </location>
</feature>
<feature type="strand" evidence="5">
    <location>
        <begin position="4"/>
        <end position="6"/>
    </location>
</feature>
<feature type="helix" evidence="6">
    <location>
        <begin position="7"/>
        <end position="16"/>
    </location>
</feature>
<feature type="strand" evidence="6">
    <location>
        <begin position="19"/>
        <end position="26"/>
    </location>
</feature>
<feature type="helix" evidence="6">
    <location>
        <begin position="32"/>
        <end position="45"/>
    </location>
</feature>
<feature type="strand" evidence="5">
    <location>
        <begin position="49"/>
        <end position="51"/>
    </location>
</feature>
<feature type="helix" evidence="6">
    <location>
        <begin position="57"/>
        <end position="74"/>
    </location>
</feature>
<feature type="helix" evidence="6">
    <location>
        <begin position="78"/>
        <end position="93"/>
    </location>
</feature>
<feature type="helix" evidence="6">
    <location>
        <begin position="103"/>
        <end position="112"/>
    </location>
</feature>
<feature type="turn" evidence="6">
    <location>
        <begin position="113"/>
        <end position="116"/>
    </location>
</feature>
<feature type="helix" evidence="6">
    <location>
        <begin position="121"/>
        <end position="124"/>
    </location>
</feature>
<feature type="strand" evidence="7">
    <location>
        <begin position="137"/>
        <end position="140"/>
    </location>
</feature>
<feature type="strand" evidence="7">
    <location>
        <begin position="143"/>
        <end position="146"/>
    </location>
</feature>
<feature type="helix" evidence="7">
    <location>
        <begin position="151"/>
        <end position="160"/>
    </location>
</feature>
<feature type="turn" evidence="7">
    <location>
        <begin position="161"/>
        <end position="163"/>
    </location>
</feature>
<feature type="helix" evidence="7">
    <location>
        <begin position="170"/>
        <end position="177"/>
    </location>
</feature>
<feature type="helix" evidence="7">
    <location>
        <begin position="178"/>
        <end position="180"/>
    </location>
</feature>
<feature type="helix" evidence="7">
    <location>
        <begin position="183"/>
        <end position="191"/>
    </location>
</feature>
<feature type="strand" evidence="7">
    <location>
        <begin position="193"/>
        <end position="196"/>
    </location>
</feature>
<feature type="helix" evidence="7">
    <location>
        <begin position="198"/>
        <end position="217"/>
    </location>
</feature>
<feature type="strand" evidence="7">
    <location>
        <begin position="222"/>
        <end position="225"/>
    </location>
</feature>
<feature type="helix" evidence="7">
    <location>
        <begin position="231"/>
        <end position="234"/>
    </location>
</feature>
<feature type="turn" evidence="7">
    <location>
        <begin position="235"/>
        <end position="238"/>
    </location>
</feature>
<feature type="helix" evidence="7">
    <location>
        <begin position="241"/>
        <end position="244"/>
    </location>
</feature>
<feature type="helix" evidence="7">
    <location>
        <begin position="247"/>
        <end position="249"/>
    </location>
</feature>
<feature type="helix" evidence="7">
    <location>
        <begin position="250"/>
        <end position="268"/>
    </location>
</feature>
<feature type="turn" evidence="7">
    <location>
        <begin position="269"/>
        <end position="273"/>
    </location>
</feature>
<feature type="helix" evidence="7">
    <location>
        <begin position="275"/>
        <end position="278"/>
    </location>
</feature>
<feature type="helix" evidence="7">
    <location>
        <begin position="288"/>
        <end position="302"/>
    </location>
</feature>
<feature type="helix" evidence="7">
    <location>
        <begin position="306"/>
        <end position="319"/>
    </location>
</feature>
<feature type="helix" evidence="7">
    <location>
        <begin position="323"/>
        <end position="328"/>
    </location>
</feature>
<feature type="turn" evidence="7">
    <location>
        <begin position="329"/>
        <end position="331"/>
    </location>
</feature>
<feature type="helix" evidence="7">
    <location>
        <begin position="338"/>
        <end position="344"/>
    </location>
</feature>
<protein>
    <recommendedName>
        <fullName>Gag polyprotein</fullName>
    </recommendedName>
    <component>
        <recommendedName>
            <fullName>Matrix protein p15</fullName>
            <shortName>MA</shortName>
        </recommendedName>
    </component>
    <component>
        <recommendedName>
            <fullName>Capsid protein p24</fullName>
            <shortName>CA</shortName>
        </recommendedName>
    </component>
    <component>
        <recommendedName>
            <fullName>p1</fullName>
        </recommendedName>
    </component>
    <component>
        <recommendedName>
            <fullName>Nucleocapsid protein p13</fullName>
            <shortName>NC</shortName>
        </recommendedName>
    </component>
</protein>
<organismHost>
    <name type="scientific">Felidae</name>
    <name type="common">cat family</name>
    <dbReference type="NCBI Taxonomy" id="9681"/>
</organismHost>
<reference key="1">
    <citation type="journal article" date="1989" name="Proc. Natl. Acad. Sci. U.S.A.">
        <title>Nucleotide sequence and genomic organization of feline immunodeficiency virus.</title>
        <authorList>
            <person name="Talbott R.L."/>
            <person name="Sparger E.E."/>
            <person name="Lovelace K.M."/>
            <person name="Fitch W.M."/>
            <person name="Pedersen N.C."/>
            <person name="Luciw P.A."/>
            <person name="Elder J.H."/>
        </authorList>
    </citation>
    <scope>NUCLEOTIDE SEQUENCE [GENOMIC RNA]</scope>
    <source>
        <strain>Clone 34TF10</strain>
    </source>
</reference>
<reference key="2">
    <citation type="journal article" date="1989" name="Proc. Natl. Acad. Sci. U.S.A.">
        <title>Nucleotide sequence analysis of feline immunodeficiency virus: genome organization and relationship to other lentiviruses.</title>
        <authorList>
            <person name="Olmsted R.A."/>
            <person name="Hirsch V.M."/>
            <person name="Purcell R.H."/>
            <person name="Johnson P.R."/>
        </authorList>
    </citation>
    <scope>NUCLEOTIDE SEQUENCE [GENOMIC RNA]</scope>
    <source>
        <strain>Clone FIV-14</strain>
    </source>
</reference>